<gene>
    <name evidence="1" type="primary">cheD</name>
    <name type="ordered locus">Acid_5371</name>
</gene>
<organism>
    <name type="scientific">Solibacter usitatus (strain Ellin6076)</name>
    <dbReference type="NCBI Taxonomy" id="234267"/>
    <lineage>
        <taxon>Bacteria</taxon>
        <taxon>Pseudomonadati</taxon>
        <taxon>Acidobacteriota</taxon>
        <taxon>Terriglobia</taxon>
        <taxon>Bryobacterales</taxon>
        <taxon>Solibacteraceae</taxon>
        <taxon>Candidatus Solibacter</taxon>
    </lineage>
</organism>
<comment type="function">
    <text evidence="1">Probably deamidates glutamine residues to glutamate on methyl-accepting chemotaxis receptors (MCPs), playing an important role in chemotaxis.</text>
</comment>
<comment type="catalytic activity">
    <reaction evidence="1">
        <text>L-glutaminyl-[protein] + H2O = L-glutamyl-[protein] + NH4(+)</text>
        <dbReference type="Rhea" id="RHEA:16441"/>
        <dbReference type="Rhea" id="RHEA-COMP:10207"/>
        <dbReference type="Rhea" id="RHEA-COMP:10208"/>
        <dbReference type="ChEBI" id="CHEBI:15377"/>
        <dbReference type="ChEBI" id="CHEBI:28938"/>
        <dbReference type="ChEBI" id="CHEBI:29973"/>
        <dbReference type="ChEBI" id="CHEBI:30011"/>
        <dbReference type="EC" id="3.5.1.44"/>
    </reaction>
</comment>
<comment type="similarity">
    <text evidence="1">Belongs to the CheD family.</text>
</comment>
<keyword id="KW-0145">Chemotaxis</keyword>
<keyword id="KW-0378">Hydrolase</keyword>
<reference key="1">
    <citation type="journal article" date="2009" name="Appl. Environ. Microbiol.">
        <title>Three genomes from the phylum Acidobacteria provide insight into the lifestyles of these microorganisms in soils.</title>
        <authorList>
            <person name="Ward N.L."/>
            <person name="Challacombe J.F."/>
            <person name="Janssen P.H."/>
            <person name="Henrissat B."/>
            <person name="Coutinho P.M."/>
            <person name="Wu M."/>
            <person name="Xie G."/>
            <person name="Haft D.H."/>
            <person name="Sait M."/>
            <person name="Badger J."/>
            <person name="Barabote R.D."/>
            <person name="Bradley B."/>
            <person name="Brettin T.S."/>
            <person name="Brinkac L.M."/>
            <person name="Bruce D."/>
            <person name="Creasy T."/>
            <person name="Daugherty S.C."/>
            <person name="Davidsen T.M."/>
            <person name="DeBoy R.T."/>
            <person name="Detter J.C."/>
            <person name="Dodson R.J."/>
            <person name="Durkin A.S."/>
            <person name="Ganapathy A."/>
            <person name="Gwinn-Giglio M."/>
            <person name="Han C.S."/>
            <person name="Khouri H."/>
            <person name="Kiss H."/>
            <person name="Kothari S.P."/>
            <person name="Madupu R."/>
            <person name="Nelson K.E."/>
            <person name="Nelson W.C."/>
            <person name="Paulsen I."/>
            <person name="Penn K."/>
            <person name="Ren Q."/>
            <person name="Rosovitz M.J."/>
            <person name="Selengut J.D."/>
            <person name="Shrivastava S."/>
            <person name="Sullivan S.A."/>
            <person name="Tapia R."/>
            <person name="Thompson L.S."/>
            <person name="Watkins K.L."/>
            <person name="Yang Q."/>
            <person name="Yu C."/>
            <person name="Zafar N."/>
            <person name="Zhou L."/>
            <person name="Kuske C.R."/>
        </authorList>
    </citation>
    <scope>NUCLEOTIDE SEQUENCE [LARGE SCALE GENOMIC DNA]</scope>
    <source>
        <strain>Ellin6076</strain>
    </source>
</reference>
<dbReference type="EC" id="3.5.1.44" evidence="1"/>
<dbReference type="EMBL" id="CP000473">
    <property type="protein sequence ID" value="ABJ86320.1"/>
    <property type="molecule type" value="Genomic_DNA"/>
</dbReference>
<dbReference type="SMR" id="Q01VJ5"/>
<dbReference type="STRING" id="234267.Acid_5371"/>
<dbReference type="KEGG" id="sus:Acid_5371"/>
<dbReference type="eggNOG" id="COG1871">
    <property type="taxonomic scope" value="Bacteria"/>
</dbReference>
<dbReference type="HOGENOM" id="CLU_087854_2_0_0"/>
<dbReference type="InParanoid" id="Q01VJ5"/>
<dbReference type="OrthoDB" id="9807202at2"/>
<dbReference type="GO" id="GO:0050568">
    <property type="term" value="F:protein-glutamine glutaminase activity"/>
    <property type="evidence" value="ECO:0007669"/>
    <property type="project" value="UniProtKB-UniRule"/>
</dbReference>
<dbReference type="GO" id="GO:0006935">
    <property type="term" value="P:chemotaxis"/>
    <property type="evidence" value="ECO:0007669"/>
    <property type="project" value="UniProtKB-UniRule"/>
</dbReference>
<dbReference type="CDD" id="cd16352">
    <property type="entry name" value="CheD"/>
    <property type="match status" value="1"/>
</dbReference>
<dbReference type="Gene3D" id="3.30.1330.200">
    <property type="match status" value="1"/>
</dbReference>
<dbReference type="HAMAP" id="MF_01440">
    <property type="entry name" value="CheD"/>
    <property type="match status" value="1"/>
</dbReference>
<dbReference type="InterPro" id="IPR038592">
    <property type="entry name" value="CheD-like_sf"/>
</dbReference>
<dbReference type="InterPro" id="IPR005659">
    <property type="entry name" value="Chemorcpt_Glu_NH3ase_CheD"/>
</dbReference>
<dbReference type="InterPro" id="IPR011324">
    <property type="entry name" value="Cytotoxic_necrot_fac-like_cat"/>
</dbReference>
<dbReference type="PANTHER" id="PTHR35147">
    <property type="entry name" value="CHEMORECEPTOR GLUTAMINE DEAMIDASE CHED-RELATED"/>
    <property type="match status" value="1"/>
</dbReference>
<dbReference type="PANTHER" id="PTHR35147:SF1">
    <property type="entry name" value="CHEMORECEPTOR GLUTAMINE DEAMIDASE CHED-RELATED"/>
    <property type="match status" value="1"/>
</dbReference>
<dbReference type="Pfam" id="PF03975">
    <property type="entry name" value="CheD"/>
    <property type="match status" value="1"/>
</dbReference>
<dbReference type="SUPFAM" id="SSF64438">
    <property type="entry name" value="CNF1/YfiH-like putative cysteine hydrolases"/>
    <property type="match status" value="1"/>
</dbReference>
<protein>
    <recommendedName>
        <fullName evidence="1">Probable chemoreceptor glutamine deamidase CheD</fullName>
        <ecNumber evidence="1">3.5.1.44</ecNumber>
    </recommendedName>
</protein>
<feature type="chain" id="PRO_1000068561" description="Probable chemoreceptor glutamine deamidase CheD">
    <location>
        <begin position="1"/>
        <end position="169"/>
    </location>
</feature>
<evidence type="ECO:0000255" key="1">
    <source>
        <dbReference type="HAMAP-Rule" id="MF_01440"/>
    </source>
</evidence>
<name>CHED_SOLUE</name>
<proteinExistence type="inferred from homology"/>
<accession>Q01VJ5</accession>
<sequence length="169" mass="18159">MEQIIVGVADCRVGHAPEQVLATYALGSCIGLSIYDPKAAIGGMLHYMLPDSTIDPARGRENPYMFADTGIPKLVEQVCGRGANRRRLIAHAAGGASMMDPQAVFDIGKRNYLALRKILWKAGILLAGEAVGGTNSRTVRLEIGSGRLWLQENGKQKELVPSFPQKGGN</sequence>